<accession>Q86UP3</accession>
<accession>G3V138</accession>
<accession>Q18PS0</accession>
<accession>Q6ZN20</accession>
<keyword id="KW-0007">Acetylation</keyword>
<keyword id="KW-0025">Alternative splicing</keyword>
<keyword id="KW-0160">Chromosomal rearrangement</keyword>
<keyword id="KW-0175">Coiled coil</keyword>
<keyword id="KW-0238">DNA-binding</keyword>
<keyword id="KW-0371">Homeobox</keyword>
<keyword id="KW-1017">Isopeptide bond</keyword>
<keyword id="KW-0479">Metal-binding</keyword>
<keyword id="KW-0539">Nucleus</keyword>
<keyword id="KW-0597">Phosphoprotein</keyword>
<keyword id="KW-1267">Proteomics identification</keyword>
<keyword id="KW-1185">Reference proteome</keyword>
<keyword id="KW-0677">Repeat</keyword>
<keyword id="KW-0678">Repressor</keyword>
<keyword id="KW-0804">Transcription</keyword>
<keyword id="KW-0805">Transcription regulation</keyword>
<keyword id="KW-0832">Ubl conjugation</keyword>
<keyword id="KW-0862">Zinc</keyword>
<keyword id="KW-0863">Zinc-finger</keyword>
<feature type="chain" id="PRO_0000278465" description="Zinc finger homeobox protein 4">
    <location>
        <begin position="1"/>
        <end position="3567"/>
    </location>
</feature>
<feature type="zinc finger region" description="C2H2-type 1" evidence="3">
    <location>
        <begin position="613"/>
        <end position="636"/>
    </location>
</feature>
<feature type="zinc finger region" description="C2H2-type 2" evidence="3">
    <location>
        <begin position="644"/>
        <end position="667"/>
    </location>
</feature>
<feature type="zinc finger region" description="C2H2-type 3" evidence="3">
    <location>
        <begin position="699"/>
        <end position="723"/>
    </location>
</feature>
<feature type="zinc finger region" description="C2H2-type 4; degenerate" evidence="3">
    <location>
        <begin position="767"/>
        <end position="789"/>
    </location>
</feature>
<feature type="zinc finger region" description="C2H2-type 5" evidence="3">
    <location>
        <begin position="917"/>
        <end position="941"/>
    </location>
</feature>
<feature type="zinc finger region" description="C2H2-type 6" evidence="3">
    <location>
        <begin position="973"/>
        <end position="995"/>
    </location>
</feature>
<feature type="zinc finger region" description="C2H2-type 7" evidence="3">
    <location>
        <begin position="1021"/>
        <end position="1045"/>
    </location>
</feature>
<feature type="zinc finger region" description="C2H2-type 8" evidence="3">
    <location>
        <begin position="1172"/>
        <end position="1195"/>
    </location>
</feature>
<feature type="zinc finger region" description="C2H2-type 9" evidence="3">
    <location>
        <begin position="1201"/>
        <end position="1224"/>
    </location>
</feature>
<feature type="zinc finger region" description="C2H2-type 10" evidence="3">
    <location>
        <begin position="1352"/>
        <end position="1374"/>
    </location>
</feature>
<feature type="zinc finger region" description="C2H2-type 11" evidence="3">
    <location>
        <begin position="1380"/>
        <end position="1403"/>
    </location>
</feature>
<feature type="zinc finger region" description="C2H2-type 12" evidence="3">
    <location>
        <begin position="1496"/>
        <end position="1522"/>
    </location>
</feature>
<feature type="zinc finger region" description="C2H2-type 13" evidence="3">
    <location>
        <begin position="1548"/>
        <end position="1572"/>
    </location>
</feature>
<feature type="zinc finger region" description="C2H2-type 14" evidence="3">
    <location>
        <begin position="1901"/>
        <end position="1924"/>
    </location>
</feature>
<feature type="DNA-binding region" description="Homeobox 1" evidence="4">
    <location>
        <begin position="2084"/>
        <end position="2143"/>
    </location>
</feature>
<feature type="DNA-binding region" description="Homeobox 2" evidence="4">
    <location>
        <begin position="2181"/>
        <end position="2240"/>
    </location>
</feature>
<feature type="zinc finger region" description="C2H2-type 15; degenerate" evidence="3">
    <location>
        <begin position="2267"/>
        <end position="2291"/>
    </location>
</feature>
<feature type="zinc finger region" description="C2H2-type 16" evidence="3">
    <location>
        <begin position="2448"/>
        <end position="2470"/>
    </location>
</feature>
<feature type="DNA-binding region" description="Homeobox 3" evidence="4">
    <location>
        <begin position="2560"/>
        <end position="2619"/>
    </location>
</feature>
<feature type="zinc finger region" description="C2H2-type 17" evidence="3">
    <location>
        <begin position="2630"/>
        <end position="2653"/>
    </location>
</feature>
<feature type="DNA-binding region" description="Homeobox 4" evidence="4">
    <location>
        <begin position="2884"/>
        <end position="2943"/>
    </location>
</feature>
<feature type="zinc finger region" description="C2H2-type 18" evidence="3">
    <location>
        <begin position="2962"/>
        <end position="2986"/>
    </location>
</feature>
<feature type="zinc finger region" description="C2H2-type 19; degenerate" evidence="3">
    <location>
        <begin position="3354"/>
        <end position="3378"/>
    </location>
</feature>
<feature type="zinc finger region" description="C2H2-type 20" evidence="3">
    <location>
        <begin position="3398"/>
        <end position="3422"/>
    </location>
</feature>
<feature type="region of interest" description="Disordered" evidence="5">
    <location>
        <begin position="1"/>
        <end position="54"/>
    </location>
</feature>
<feature type="region of interest" description="Disordered" evidence="5">
    <location>
        <begin position="425"/>
        <end position="480"/>
    </location>
</feature>
<feature type="region of interest" description="Disordered" evidence="5">
    <location>
        <begin position="522"/>
        <end position="545"/>
    </location>
</feature>
<feature type="region of interest" description="Disordered" evidence="5">
    <location>
        <begin position="565"/>
        <end position="611"/>
    </location>
</feature>
<feature type="region of interest" description="Disordered" evidence="5">
    <location>
        <begin position="1098"/>
        <end position="1160"/>
    </location>
</feature>
<feature type="region of interest" description="Disordered" evidence="5">
    <location>
        <begin position="1254"/>
        <end position="1324"/>
    </location>
</feature>
<feature type="region of interest" description="Disordered" evidence="5">
    <location>
        <begin position="1429"/>
        <end position="1480"/>
    </location>
</feature>
<feature type="region of interest" description="Disordered" evidence="5">
    <location>
        <begin position="1761"/>
        <end position="1791"/>
    </location>
</feature>
<feature type="region of interest" description="Disordered" evidence="5">
    <location>
        <begin position="1809"/>
        <end position="1858"/>
    </location>
</feature>
<feature type="region of interest" description="Disordered" evidence="5">
    <location>
        <begin position="1948"/>
        <end position="2024"/>
    </location>
</feature>
<feature type="region of interest" description="Disordered" evidence="5">
    <location>
        <begin position="2289"/>
        <end position="2311"/>
    </location>
</feature>
<feature type="region of interest" description="Disordered" evidence="5">
    <location>
        <begin position="2328"/>
        <end position="2431"/>
    </location>
</feature>
<feature type="region of interest" description="Disordered" evidence="5">
    <location>
        <begin position="2507"/>
        <end position="2564"/>
    </location>
</feature>
<feature type="region of interest" description="Disordered" evidence="5">
    <location>
        <begin position="2764"/>
        <end position="2811"/>
    </location>
</feature>
<feature type="region of interest" description="Disordered" evidence="5">
    <location>
        <begin position="2829"/>
        <end position="2885"/>
    </location>
</feature>
<feature type="region of interest" description="Disordered" evidence="5">
    <location>
        <begin position="3092"/>
        <end position="3172"/>
    </location>
</feature>
<feature type="region of interest" description="Disordered" evidence="5">
    <location>
        <begin position="3281"/>
        <end position="3337"/>
    </location>
</feature>
<feature type="region of interest" description="Disordered" evidence="5">
    <location>
        <begin position="3443"/>
        <end position="3462"/>
    </location>
</feature>
<feature type="region of interest" description="Disordered" evidence="5">
    <location>
        <begin position="3511"/>
        <end position="3534"/>
    </location>
</feature>
<feature type="coiled-coil region" evidence="2">
    <location>
        <begin position="3265"/>
        <end position="3294"/>
    </location>
</feature>
<feature type="compositionally biased region" description="Polar residues" evidence="5">
    <location>
        <begin position="9"/>
        <end position="28"/>
    </location>
</feature>
<feature type="compositionally biased region" description="Basic and acidic residues" evidence="5">
    <location>
        <begin position="39"/>
        <end position="54"/>
    </location>
</feature>
<feature type="compositionally biased region" description="Basic and acidic residues" evidence="5">
    <location>
        <begin position="434"/>
        <end position="452"/>
    </location>
</feature>
<feature type="compositionally biased region" description="Acidic residues" evidence="5">
    <location>
        <begin position="468"/>
        <end position="480"/>
    </location>
</feature>
<feature type="compositionally biased region" description="Basic and acidic residues" evidence="5">
    <location>
        <begin position="1120"/>
        <end position="1132"/>
    </location>
</feature>
<feature type="compositionally biased region" description="Basic and acidic residues" evidence="5">
    <location>
        <begin position="1148"/>
        <end position="1160"/>
    </location>
</feature>
<feature type="compositionally biased region" description="Basic and acidic residues" evidence="5">
    <location>
        <begin position="1281"/>
        <end position="1310"/>
    </location>
</feature>
<feature type="compositionally biased region" description="Basic and acidic residues" evidence="5">
    <location>
        <begin position="1433"/>
        <end position="1453"/>
    </location>
</feature>
<feature type="compositionally biased region" description="Low complexity" evidence="5">
    <location>
        <begin position="1761"/>
        <end position="1772"/>
    </location>
</feature>
<feature type="compositionally biased region" description="Low complexity" evidence="5">
    <location>
        <begin position="1779"/>
        <end position="1791"/>
    </location>
</feature>
<feature type="compositionally biased region" description="Basic and acidic residues" evidence="5">
    <location>
        <begin position="1809"/>
        <end position="1845"/>
    </location>
</feature>
<feature type="compositionally biased region" description="Pro residues" evidence="5">
    <location>
        <begin position="1955"/>
        <end position="1974"/>
    </location>
</feature>
<feature type="compositionally biased region" description="Pro residues" evidence="5">
    <location>
        <begin position="1991"/>
        <end position="2019"/>
    </location>
</feature>
<feature type="compositionally biased region" description="Acidic residues" evidence="5">
    <location>
        <begin position="2293"/>
        <end position="2309"/>
    </location>
</feature>
<feature type="compositionally biased region" description="Low complexity" evidence="5">
    <location>
        <begin position="2331"/>
        <end position="2345"/>
    </location>
</feature>
<feature type="compositionally biased region" description="Basic and acidic residues" evidence="5">
    <location>
        <begin position="2352"/>
        <end position="2370"/>
    </location>
</feature>
<feature type="compositionally biased region" description="Polar residues" evidence="5">
    <location>
        <begin position="2419"/>
        <end position="2431"/>
    </location>
</feature>
<feature type="compositionally biased region" description="Polar residues" evidence="5">
    <location>
        <begin position="2507"/>
        <end position="2530"/>
    </location>
</feature>
<feature type="compositionally biased region" description="Basic and acidic residues" evidence="5">
    <location>
        <begin position="2535"/>
        <end position="2559"/>
    </location>
</feature>
<feature type="compositionally biased region" description="Polar residues" evidence="5">
    <location>
        <begin position="2764"/>
        <end position="2785"/>
    </location>
</feature>
<feature type="compositionally biased region" description="Basic and acidic residues" evidence="5">
    <location>
        <begin position="2830"/>
        <end position="2839"/>
    </location>
</feature>
<feature type="compositionally biased region" description="Low complexity" evidence="5">
    <location>
        <begin position="2862"/>
        <end position="2874"/>
    </location>
</feature>
<feature type="compositionally biased region" description="Low complexity" evidence="5">
    <location>
        <begin position="3092"/>
        <end position="3110"/>
    </location>
</feature>
<feature type="compositionally biased region" description="Pro residues" evidence="5">
    <location>
        <begin position="3111"/>
        <end position="3125"/>
    </location>
</feature>
<feature type="compositionally biased region" description="Polar residues" evidence="5">
    <location>
        <begin position="3126"/>
        <end position="3135"/>
    </location>
</feature>
<feature type="compositionally biased region" description="Basic and acidic residues" evidence="5">
    <location>
        <begin position="3153"/>
        <end position="3172"/>
    </location>
</feature>
<feature type="compositionally biased region" description="Low complexity" evidence="5">
    <location>
        <begin position="3281"/>
        <end position="3293"/>
    </location>
</feature>
<feature type="compositionally biased region" description="Polar residues" evidence="5">
    <location>
        <begin position="3294"/>
        <end position="3314"/>
    </location>
</feature>
<feature type="compositionally biased region" description="Basic and acidic residues" evidence="5">
    <location>
        <begin position="3315"/>
        <end position="3337"/>
    </location>
</feature>
<feature type="compositionally biased region" description="Low complexity" evidence="5">
    <location>
        <begin position="3447"/>
        <end position="3462"/>
    </location>
</feature>
<feature type="modified residue" description="N-acetylmethionine" evidence="11">
    <location>
        <position position="1"/>
    </location>
</feature>
<feature type="modified residue" description="Phosphoserine" evidence="10">
    <location>
        <position position="2663"/>
    </location>
</feature>
<feature type="cross-link" description="Glycyl lysine isopeptide (Lys-Gly) (interchain with G-Cter in SUMO2)" evidence="13">
    <location>
        <position position="1149"/>
    </location>
</feature>
<feature type="cross-link" description="Glycyl lysine isopeptide (Lys-Gly) (interchain with G-Cter in SUMO2)" evidence="13">
    <location>
        <position position="1299"/>
    </location>
</feature>
<feature type="cross-link" description="Glycyl lysine isopeptide (Lys-Gly) (interchain with G-Cter in SUMO2)" evidence="13">
    <location>
        <position position="1324"/>
    </location>
</feature>
<feature type="cross-link" description="Glycyl lysine isopeptide (Lys-Gly) (interchain with G-Cter in SUMO2)" evidence="13">
    <location>
        <position position="1546"/>
    </location>
</feature>
<feature type="cross-link" description="Glycyl lysine isopeptide (Lys-Gly) (interchain with G-Cter in SUMO2)" evidence="13">
    <location>
        <position position="1790"/>
    </location>
</feature>
<feature type="cross-link" description="Glycyl lysine isopeptide (Lys-Gly) (interchain with G-Cter in SUMO2)" evidence="12 13">
    <location>
        <position position="3154"/>
    </location>
</feature>
<feature type="splice variant" id="VSP_023298" description="In isoform 2 and isoform 5." evidence="8">
    <original>L</original>
    <variation>LVNNELPPEIRLASGQLMGDDLSLLTA</variation>
    <location>
        <position position="863"/>
    </location>
</feature>
<feature type="splice variant" id="VSP_023299" description="In isoform 3." evidence="7">
    <original>HLQKQEGAVNPESCYYYCAVCDYTTKVKLNLVQHVRSVKHQQTE</original>
    <variation>VSSDIHFRWHRVEKGINSFRAWSTSLQLKEKKREKTSKGRGHSF</variation>
    <location>
        <begin position="1006"/>
        <end position="1049"/>
    </location>
</feature>
<feature type="splice variant" id="VSP_023300" description="In isoform 3." evidence="7">
    <location>
        <begin position="1050"/>
        <end position="3567"/>
    </location>
</feature>
<feature type="splice variant" id="VSP_023301" description="In isoform 2 and isoform 5." evidence="8">
    <original>H</original>
    <variation>QLRSTSEEQS</variation>
    <location>
        <position position="1100"/>
    </location>
</feature>
<feature type="splice variant" id="VSP_023302" description="In isoform 2 and isoform 5." evidence="8">
    <original>S</original>
    <variation>SGIITPEKELK</variation>
    <location>
        <position position="1135"/>
    </location>
</feature>
<feature type="splice variant" id="VSP_023303" description="In isoform 2." evidence="8">
    <location>
        <begin position="2000"/>
        <end position="2016"/>
    </location>
</feature>
<feature type="splice variant" id="VSP_023304" description="In isoform 2, isoform 4 and isoform 5." evidence="8">
    <original>IS</original>
    <variation>TLTPPG</variation>
    <location>
        <begin position="3082"/>
        <end position="3083"/>
    </location>
</feature>
<feature type="sequence variant" id="VAR_057375" description="In dbSNP:rs16919452.">
    <original>I</original>
    <variation>V</variation>
    <location>
        <position position="2036"/>
    </location>
</feature>
<feature type="sequence variant" id="VAR_057376" description="In dbSNP:rs16939380.">
    <original>V</original>
    <variation>G</variation>
    <location>
        <position position="3033"/>
    </location>
</feature>
<feature type="sequence conflict" description="In Ref. 3; AK131408." evidence="9" ref="3">
    <original>P</original>
    <variation>L</variation>
    <location>
        <position position="32"/>
    </location>
</feature>
<feature type="sequence conflict" description="In Ref. 3; AK131408." evidence="9" ref="3">
    <original>V</original>
    <variation>A</variation>
    <location>
        <position position="406"/>
    </location>
</feature>
<feature type="sequence conflict" description="In Ref. 3; AK131408." evidence="9" ref="3">
    <original>K</original>
    <variation>E</variation>
    <location>
        <position position="937"/>
    </location>
</feature>
<protein>
    <recommendedName>
        <fullName>Zinc finger homeobox protein 4</fullName>
    </recommendedName>
    <alternativeName>
        <fullName>Zinc finger homeodomain protein 4</fullName>
        <shortName>ZFH-4</shortName>
    </alternativeName>
</protein>
<evidence type="ECO:0000250" key="1"/>
<evidence type="ECO:0000255" key="2"/>
<evidence type="ECO:0000255" key="3">
    <source>
        <dbReference type="PROSITE-ProRule" id="PRU00042"/>
    </source>
</evidence>
<evidence type="ECO:0000255" key="4">
    <source>
        <dbReference type="PROSITE-ProRule" id="PRU00108"/>
    </source>
</evidence>
<evidence type="ECO:0000256" key="5">
    <source>
        <dbReference type="SAM" id="MobiDB-lite"/>
    </source>
</evidence>
<evidence type="ECO:0000269" key="6">
    <source>
    </source>
</evidence>
<evidence type="ECO:0000303" key="7">
    <source>
    </source>
</evidence>
<evidence type="ECO:0000303" key="8">
    <source>
    </source>
</evidence>
<evidence type="ECO:0000305" key="9"/>
<evidence type="ECO:0007744" key="10">
    <source>
    </source>
</evidence>
<evidence type="ECO:0007744" key="11">
    <source>
    </source>
</evidence>
<evidence type="ECO:0007744" key="12">
    <source>
    </source>
</evidence>
<evidence type="ECO:0007744" key="13">
    <source>
    </source>
</evidence>
<gene>
    <name type="primary">ZFHX4</name>
</gene>
<sequence>METCDSPPISRQENGQSTSKLCGTTQLDNEVPEKVAGMEPDRENSSTDDNLKTDERKSEALLGFSVENAAATQVTSAKEIPCNECATSFPSLQKYMEHHCPNARLPVLKDDNESEISELEDSDVENLTGEIVYQPDGSAYIIEDSKESGQNAQTGANSKLFSTAMFLDSLASAGEKSDQSASAPMSFYPQIINTFHIASSLGKPFTADQAFPNTSALAGVGPVLHSFRVYDLRHKREKDYLTSDGSAKNSCVSKDVPNNVDLSKFDGCVSDGKRKPVLMCFLCKLSFGYIRSFVTHAVHDHRMTLNDEEQKLLSNKCVSAIIQGIGKDKEPLISFLEPKKSTSVYPHFSTTNLIGPDPTFRGLWSAFHVENGDSLPAGFAFLKGSASTSSSAEQPLGITQMPKAEVNLGGLSSLVVNTPITSVSLSHSSSESSKMSESKDQENNCERPKESNVLHPNGECPVKSEPTEPGDEDEEDAYSNELDDEEVLGELTDSIGNKDFPLLNQSISPLSSSVLKFIEKGTSSSSATVSDDTEKKKQTAAVRASGSVASNYGISGKDFADASASKDSATAAHPSEIARGDEDSSATPHQHGFTPSTPGTPGPGGDGSPGSGIECPKCDTVLGSSRSLGGHMTMMHSRNSCKTLKCPKCNWHYKYQQTLEAHMKEKHPEPGGSCVYCKTGQPHPRLARGESYTCGYKPFRCEVCNYSTTTKGNLSIHMQSDKHLNNVQNLQNGNGEQVFGHSAPAPNTSLSGCGTPSPSKPKQKPTWRCEVCDYETNVARNLRIHMTSEKHMHNMMLLQQNMKQIQHNLHLGLAPAEAELYQYYLAQNIGLTGMKLENPADPQLMINPFQLDPATAAALAPGLGELSPYISDPALKLFQCAVCNKFTSDSLEALSVHVSSERSLPEEEWRAVIGDIYQCKLCNYNTQLKANFQLHCKTDKHMQKYQLVAHIKEGGKSNEWRLKCIAIGNPVHLKCNACDYYTNSVDKLRLHTTNHRHEAALKLYKHLQKQEGAVNPESCYYYCAVCDYTTKVKLNLVQHVRSVKHQQTEGLRKLQLHQQGLAPEEDNLSEIFFVKDCPPNELETASLGARTCDDDLTEQHEEAEGAIKPTAVAEDDEKDTSERDNSEGKNSNKDSVSVAGGTQPLLLAKEEDVATKRSKPTEDNKFCHEQFYQCPYCNYNSRDQSRIQMHVLSQHSVQPVICCPLCQDVLSNKMHLQLHLTHLHSVSPDCVEKLLMTVPVPDVMMPNSMLLPAAASEKSERDTPAAVTAEGSGKYSGESPMDDKSMAGLEDSKANVEVKNEEQKPTKEPLEVSEWNKNSSKDVKIPDTLQDQLNEQQKRQPLSVSDRHVYKYRCNHCSLAFKTMQKLQIHSQYHAIRAATMCNLCQRSFRTFQALKKHLEAGHPELSEAELQQLYASLPVNGELWAESETMSQDDHGLEQEMEREYEVDHEGKASPVGSDSSSIPDDMGSEPKRTLPFRKGPNFTMEKFLDPSRPYKCTVCKESFTQKNILLVHYNSVSHLHKLKKVLQEASSPVPQETNSNTDNKPYKCSICNVAYSQSSTLEIHMRSVLHQTKARAAKLEPSGHVAGGHSIAANVNSPGQGMLDSMSLAAVNSKDTHLDAKELNKKQTPDLISAQPAHHPPQSPAQIQMQLQHELQQQAAFFQPQFLNPAFLPHFPMTPEALLQFQQPQFLFPFYIPGTEFSLGPDLGLPGSATFGMPGMTGMAGSLLEDLKQQIQTQHHVGQTQLQILQQQAQQYQATQPQLQPQKQQQQPPPPQQQQQQQASKLLKQEQSNIVSADCQIMKDVPSYKEAEDISEKPEKPKQEFISEGEGLKEGKDTKKQKSLEPSIPPPRIASGARGNAAKALLENFGFELVIQYNENRQKVQKKGKSGEGENTDKLECGTCGKLFSNVLILKSHQEHVHGQFFPYAALEKFARQYREAYDKLYPISPSSPETPPPPPPPPPLPPAPPQPSSMGPVKIPNTVSTPLQAPPPTPPPPPPPPPPPPPPPPPPPPSAPPQVQLPVSLDLPLFPSIMMQPVQHPALPPQLALQLPQMDALSADLTQLCQQQLGLDPNFLRHSQFKRPRTRITDDQLKILRAYFDINNSPSEEQIQEMAEKSGLSQKVIKHWFRNTLFKERQRNKDSPYNFSNPPITVLEDIRIDPQPTSLEHYKSDASFSKRSSRTRFTDYQLRVLQDFFDTNAYPKDDEIEQLSTVLNLPTRVIVVWFQNARQKARKSYENQAETKDNEKRELTNERYIRTSNMQYQCKKCNVVFPRIFDLITHQKKQCYKDEDDDAQDESQTEDSMDATDQVVYKHCTVSGQTDAAKNAAAPAASSGSGTSTPLIPSPKPEPEKTSPKPEYPAEKPKQSDPSPPSQGTKPALPLASTSSDPPQASTAQPQPQPQPPKQPQLIGRPPSASQTPVPSSPLQISMTSLQNSLPPQLLQYQCDQCTVAFPTLELWQEHQHMHFLAAQNQFLHSPFLERPMDMPYMIFDPNNPLMTGQLLGSSLTQMPPQASSSHTTAPTTVAASLKRKLDDKEDNNCSEKEGGNSGEDQHRDKRLRTTITPEQLEILYEKYLLDSNPTRKMLDHIAREVGLKKRVVQVWFQNTRARERKGQFRAVGPAQSHKRCPFCRALFKAKSALESHIRSRHWNEGKQAGYSLPPSPLISTEDGGESPQKYIYFDYPSLPLTKIDLSSENELASTVSTPVSKTAELSPKNLLSPSSFKAECSEDVENLNAPPAEAGYDQNKTDFDETSSINTAISDATTGDEGNTEMESTTGSSGDVKPALSPKEPKTLDTLPKPATTPTTEVCDDKFLFSLTSPSIHFNDKDGDHDQSFYITDDPDDNADRSETSSIADPSSPNPFGSSNPFKSKSNDRPGHKRFRTQMSNLQLKVLKACFSDYRTPTMQECEMLGNEIGLPKRVVQVWFQNARAKEKKFKINIGKPFMINQGGTEGTKPECTLCGVKYSARLSIRDHIFSKQHISKVRETVGSQLDREKDYLAPTTVRQLMAQQELDRIKKASDVLGLTVQQPGMMDSSSLHGISLPTAYPGLPGLPPVLLPGMNGPSSLPGFPQNSNISAGMLGFPTSATSSPALSLSSAPTKPLLQTPPPPPPPPPPPPSSSLSGQQTEQQNKESEKKQTKPNKVKKIKEEELEATKPEKHPKKEEKISSALSVLGKVVGETHVDPIQLQALQNAIAGDPASFIGGQFLPYFIPGFASYFTPQLPGTVQGGYFPPVCGMESLFPYGPTMPQTLAGLSPGALLQQYQQYQQNLQESLQKQQKQQQEQQQKPVQAKTSKVESDQPQNSNDASETKEDKSTATESTKEEPQLESKSADFSDTYVVPFVKYEFICRKCQMMFTDEDAAVNHQKSFCYFGQPLIDPQETVLRVPVSKYQCLACDVAISGNEALSQHLQSSLHKEKTIKQAMRNAKEHVRLLPHSVCSPNPNTTSTSQSAASSNNTYPHLSCFSMKSWPNILFQASARRAASPPSSPPSLSLPSTVTSSLCSTSGVQTSLPTESCSDESDSELSQKLEDLDNSLEVKAKPASGLDGNFNSIRMDMFSV</sequence>
<reference key="1">
    <citation type="journal article" date="2006" name="Biol. Pharm. Bull.">
        <title>A homeodomain-zinc finger protein, ZFHX4, is expressed in neuronal differentiation manner and suppressed in muscle differentiation manner.</title>
        <authorList>
            <person name="Hemmi K."/>
            <person name="Ma D."/>
            <person name="Miura Y."/>
            <person name="Kawaguchi M."/>
            <person name="Sasahara M."/>
            <person name="Hashimoto-Tamaoki T."/>
            <person name="Tamaoki T."/>
            <person name="Sakata N."/>
            <person name="Tsuchiya K."/>
        </authorList>
    </citation>
    <scope>NUCLEOTIDE SEQUENCE [MRNA] (ISOFORM 2)</scope>
    <scope>ALTERNATIVE SPLICING</scope>
</reference>
<reference key="2">
    <citation type="submission" date="2003-03" db="EMBL/GenBank/DDBJ databases">
        <authorList>
            <person name="Shan Y.X."/>
            <person name="Huang C.Q."/>
            <person name="Dang Y.J."/>
            <person name="Yu L."/>
        </authorList>
    </citation>
    <scope>NUCLEOTIDE SEQUENCE [MRNA] (ISOFORM 1)</scope>
</reference>
<reference key="3">
    <citation type="journal article" date="2004" name="Nat. Genet.">
        <title>Complete sequencing and characterization of 21,243 full-length human cDNAs.</title>
        <authorList>
            <person name="Ota T."/>
            <person name="Suzuki Y."/>
            <person name="Nishikawa T."/>
            <person name="Otsuki T."/>
            <person name="Sugiyama T."/>
            <person name="Irie R."/>
            <person name="Wakamatsu A."/>
            <person name="Hayashi K."/>
            <person name="Sato H."/>
            <person name="Nagai K."/>
            <person name="Kimura K."/>
            <person name="Makita H."/>
            <person name="Sekine M."/>
            <person name="Obayashi M."/>
            <person name="Nishi T."/>
            <person name="Shibahara T."/>
            <person name="Tanaka T."/>
            <person name="Ishii S."/>
            <person name="Yamamoto J."/>
            <person name="Saito K."/>
            <person name="Kawai Y."/>
            <person name="Isono Y."/>
            <person name="Nakamura Y."/>
            <person name="Nagahari K."/>
            <person name="Murakami K."/>
            <person name="Yasuda T."/>
            <person name="Iwayanagi T."/>
            <person name="Wagatsuma M."/>
            <person name="Shiratori A."/>
            <person name="Sudo H."/>
            <person name="Hosoiri T."/>
            <person name="Kaku Y."/>
            <person name="Kodaira H."/>
            <person name="Kondo H."/>
            <person name="Sugawara M."/>
            <person name="Takahashi M."/>
            <person name="Kanda K."/>
            <person name="Yokoi T."/>
            <person name="Furuya T."/>
            <person name="Kikkawa E."/>
            <person name="Omura Y."/>
            <person name="Abe K."/>
            <person name="Kamihara K."/>
            <person name="Katsuta N."/>
            <person name="Sato K."/>
            <person name="Tanikawa M."/>
            <person name="Yamazaki M."/>
            <person name="Ninomiya K."/>
            <person name="Ishibashi T."/>
            <person name="Yamashita H."/>
            <person name="Murakawa K."/>
            <person name="Fujimori K."/>
            <person name="Tanai H."/>
            <person name="Kimata M."/>
            <person name="Watanabe M."/>
            <person name="Hiraoka S."/>
            <person name="Chiba Y."/>
            <person name="Ishida S."/>
            <person name="Ono Y."/>
            <person name="Takiguchi S."/>
            <person name="Watanabe S."/>
            <person name="Yosida M."/>
            <person name="Hotuta T."/>
            <person name="Kusano J."/>
            <person name="Kanehori K."/>
            <person name="Takahashi-Fujii A."/>
            <person name="Hara H."/>
            <person name="Tanase T.-O."/>
            <person name="Nomura Y."/>
            <person name="Togiya S."/>
            <person name="Komai F."/>
            <person name="Hara R."/>
            <person name="Takeuchi K."/>
            <person name="Arita M."/>
            <person name="Imose N."/>
            <person name="Musashino K."/>
            <person name="Yuuki H."/>
            <person name="Oshima A."/>
            <person name="Sasaki N."/>
            <person name="Aotsuka S."/>
            <person name="Yoshikawa Y."/>
            <person name="Matsunawa H."/>
            <person name="Ichihara T."/>
            <person name="Shiohata N."/>
            <person name="Sano S."/>
            <person name="Moriya S."/>
            <person name="Momiyama H."/>
            <person name="Satoh N."/>
            <person name="Takami S."/>
            <person name="Terashima Y."/>
            <person name="Suzuki O."/>
            <person name="Nakagawa S."/>
            <person name="Senoh A."/>
            <person name="Mizoguchi H."/>
            <person name="Goto Y."/>
            <person name="Shimizu F."/>
            <person name="Wakebe H."/>
            <person name="Hishigaki H."/>
            <person name="Watanabe T."/>
            <person name="Sugiyama A."/>
            <person name="Takemoto M."/>
            <person name="Kawakami B."/>
            <person name="Yamazaki M."/>
            <person name="Watanabe K."/>
            <person name="Kumagai A."/>
            <person name="Itakura S."/>
            <person name="Fukuzumi Y."/>
            <person name="Fujimori Y."/>
            <person name="Komiyama M."/>
            <person name="Tashiro H."/>
            <person name="Tanigami A."/>
            <person name="Fujiwara T."/>
            <person name="Ono T."/>
            <person name="Yamada K."/>
            <person name="Fujii Y."/>
            <person name="Ozaki K."/>
            <person name="Hirao M."/>
            <person name="Ohmori Y."/>
            <person name="Kawabata A."/>
            <person name="Hikiji T."/>
            <person name="Kobatake N."/>
            <person name="Inagaki H."/>
            <person name="Ikema Y."/>
            <person name="Okamoto S."/>
            <person name="Okitani R."/>
            <person name="Kawakami T."/>
            <person name="Noguchi S."/>
            <person name="Itoh T."/>
            <person name="Shigeta K."/>
            <person name="Senba T."/>
            <person name="Matsumura K."/>
            <person name="Nakajima Y."/>
            <person name="Mizuno T."/>
            <person name="Morinaga M."/>
            <person name="Sasaki M."/>
            <person name="Togashi T."/>
            <person name="Oyama M."/>
            <person name="Hata H."/>
            <person name="Watanabe M."/>
            <person name="Komatsu T."/>
            <person name="Mizushima-Sugano J."/>
            <person name="Satoh T."/>
            <person name="Shirai Y."/>
            <person name="Takahashi Y."/>
            <person name="Nakagawa K."/>
            <person name="Okumura K."/>
            <person name="Nagase T."/>
            <person name="Nomura N."/>
            <person name="Kikuchi H."/>
            <person name="Masuho Y."/>
            <person name="Yamashita R."/>
            <person name="Nakai K."/>
            <person name="Yada T."/>
            <person name="Nakamura Y."/>
            <person name="Ohara O."/>
            <person name="Isogai T."/>
            <person name="Sugano S."/>
        </authorList>
    </citation>
    <scope>NUCLEOTIDE SEQUENCE [LARGE SCALE MRNA] (ISOFORM 3)</scope>
    <source>
        <tissue>Mesangial cell</tissue>
    </source>
</reference>
<reference key="4">
    <citation type="journal article" date="2006" name="Nature">
        <title>DNA sequence and analysis of human chromosome 8.</title>
        <authorList>
            <person name="Nusbaum C."/>
            <person name="Mikkelsen T.S."/>
            <person name="Zody M.C."/>
            <person name="Asakawa S."/>
            <person name="Taudien S."/>
            <person name="Garber M."/>
            <person name="Kodira C.D."/>
            <person name="Schueler M.G."/>
            <person name="Shimizu A."/>
            <person name="Whittaker C.A."/>
            <person name="Chang J.L."/>
            <person name="Cuomo C.A."/>
            <person name="Dewar K."/>
            <person name="FitzGerald M.G."/>
            <person name="Yang X."/>
            <person name="Allen N.R."/>
            <person name="Anderson S."/>
            <person name="Asakawa T."/>
            <person name="Blechschmidt K."/>
            <person name="Bloom T."/>
            <person name="Borowsky M.L."/>
            <person name="Butler J."/>
            <person name="Cook A."/>
            <person name="Corum B."/>
            <person name="DeArellano K."/>
            <person name="DeCaprio D."/>
            <person name="Dooley K.T."/>
            <person name="Dorris L. III"/>
            <person name="Engels R."/>
            <person name="Gloeckner G."/>
            <person name="Hafez N."/>
            <person name="Hagopian D.S."/>
            <person name="Hall J.L."/>
            <person name="Ishikawa S.K."/>
            <person name="Jaffe D.B."/>
            <person name="Kamat A."/>
            <person name="Kudoh J."/>
            <person name="Lehmann R."/>
            <person name="Lokitsang T."/>
            <person name="Macdonald P."/>
            <person name="Major J.E."/>
            <person name="Matthews C.D."/>
            <person name="Mauceli E."/>
            <person name="Menzel U."/>
            <person name="Mihalev A.H."/>
            <person name="Minoshima S."/>
            <person name="Murayama Y."/>
            <person name="Naylor J.W."/>
            <person name="Nicol R."/>
            <person name="Nguyen C."/>
            <person name="O'Leary S.B."/>
            <person name="O'Neill K."/>
            <person name="Parker S.C.J."/>
            <person name="Polley A."/>
            <person name="Raymond C.K."/>
            <person name="Reichwald K."/>
            <person name="Rodriguez J."/>
            <person name="Sasaki T."/>
            <person name="Schilhabel M."/>
            <person name="Siddiqui R."/>
            <person name="Smith C.L."/>
            <person name="Sneddon T.P."/>
            <person name="Talamas J.A."/>
            <person name="Tenzin P."/>
            <person name="Topham K."/>
            <person name="Venkataraman V."/>
            <person name="Wen G."/>
            <person name="Yamazaki S."/>
            <person name="Young S.K."/>
            <person name="Zeng Q."/>
            <person name="Zimmer A.R."/>
            <person name="Rosenthal A."/>
            <person name="Birren B.W."/>
            <person name="Platzer M."/>
            <person name="Shimizu N."/>
            <person name="Lander E.S."/>
        </authorList>
    </citation>
    <scope>NUCLEOTIDE SEQUENCE [LARGE SCALE GENOMIC DNA]</scope>
</reference>
<reference key="5">
    <citation type="submission" date="2005-07" db="EMBL/GenBank/DDBJ databases">
        <authorList>
            <person name="Mural R.J."/>
            <person name="Istrail S."/>
            <person name="Sutton G."/>
            <person name="Florea L."/>
            <person name="Halpern A.L."/>
            <person name="Mobarry C.M."/>
            <person name="Lippert R."/>
            <person name="Walenz B."/>
            <person name="Shatkay H."/>
            <person name="Dew I."/>
            <person name="Miller J.R."/>
            <person name="Flanigan M.J."/>
            <person name="Edwards N.J."/>
            <person name="Bolanos R."/>
            <person name="Fasulo D."/>
            <person name="Halldorsson B.V."/>
            <person name="Hannenhalli S."/>
            <person name="Turner R."/>
            <person name="Yooseph S."/>
            <person name="Lu F."/>
            <person name="Nusskern D.R."/>
            <person name="Shue B.C."/>
            <person name="Zheng X.H."/>
            <person name="Zhong F."/>
            <person name="Delcher A.L."/>
            <person name="Huson D.H."/>
            <person name="Kravitz S.A."/>
            <person name="Mouchard L."/>
            <person name="Reinert K."/>
            <person name="Remington K.A."/>
            <person name="Clark A.G."/>
            <person name="Waterman M.S."/>
            <person name="Eichler E.E."/>
            <person name="Adams M.D."/>
            <person name="Hunkapiller M.W."/>
            <person name="Myers E.W."/>
            <person name="Venter J.C."/>
        </authorList>
    </citation>
    <scope>NUCLEOTIDE SEQUENCE [LARGE SCALE GENOMIC DNA]</scope>
</reference>
<reference key="6">
    <citation type="journal article" date="2002" name="Hum. Genet.">
        <title>A candidate gene for congenital bilateral isolated ptosis identified by molecular analysis of a de novo balanced translocation.</title>
        <authorList>
            <person name="McMullan T.W."/>
            <person name="Crolla J.A."/>
            <person name="Gregory S.G."/>
            <person name="Carter N.P."/>
            <person name="Cooper R.A."/>
            <person name="Howell G.R."/>
            <person name="Robinson D.O."/>
        </authorList>
    </citation>
    <scope>CHROMOSOMAL REARRANGEMENT</scope>
</reference>
<reference key="7">
    <citation type="journal article" date="2008" name="Proc. Natl. Acad. Sci. U.S.A.">
        <title>A quantitative atlas of mitotic phosphorylation.</title>
        <authorList>
            <person name="Dephoure N."/>
            <person name="Zhou C."/>
            <person name="Villen J."/>
            <person name="Beausoleil S.A."/>
            <person name="Bakalarski C.E."/>
            <person name="Elledge S.J."/>
            <person name="Gygi S.P."/>
        </authorList>
    </citation>
    <scope>PHOSPHORYLATION [LARGE SCALE ANALYSIS] AT SER-2663</scope>
    <scope>IDENTIFICATION BY MASS SPECTROMETRY [LARGE SCALE ANALYSIS]</scope>
    <source>
        <tissue>Cervix carcinoma</tissue>
    </source>
</reference>
<reference key="8">
    <citation type="journal article" date="2009" name="Anal. Chem.">
        <title>Lys-N and trypsin cover complementary parts of the phosphoproteome in a refined SCX-based approach.</title>
        <authorList>
            <person name="Gauci S."/>
            <person name="Helbig A.O."/>
            <person name="Slijper M."/>
            <person name="Krijgsveld J."/>
            <person name="Heck A.J."/>
            <person name="Mohammed S."/>
        </authorList>
    </citation>
    <scope>ACETYLATION [LARGE SCALE ANALYSIS] AT MET-1</scope>
    <scope>IDENTIFICATION BY MASS SPECTROMETRY [LARGE SCALE ANALYSIS]</scope>
</reference>
<reference key="9">
    <citation type="journal article" date="2014" name="J. Proteomics">
        <title>An enzyme assisted RP-RPLC approach for in-depth analysis of human liver phosphoproteome.</title>
        <authorList>
            <person name="Bian Y."/>
            <person name="Song C."/>
            <person name="Cheng K."/>
            <person name="Dong M."/>
            <person name="Wang F."/>
            <person name="Huang J."/>
            <person name="Sun D."/>
            <person name="Wang L."/>
            <person name="Ye M."/>
            <person name="Zou H."/>
        </authorList>
    </citation>
    <scope>IDENTIFICATION BY MASS SPECTROMETRY [LARGE SCALE ANALYSIS]</scope>
    <source>
        <tissue>Liver</tissue>
    </source>
</reference>
<reference key="10">
    <citation type="journal article" date="2015" name="Mol. Cell. Proteomics">
        <title>System-wide analysis of SUMOylation dynamics in response to replication stress reveals novel small ubiquitin-like modified target proteins and acceptor lysines relevant for genome stability.</title>
        <authorList>
            <person name="Xiao Z."/>
            <person name="Chang J.G."/>
            <person name="Hendriks I.A."/>
            <person name="Sigurdsson J.O."/>
            <person name="Olsen J.V."/>
            <person name="Vertegaal A.C."/>
        </authorList>
    </citation>
    <scope>SUMOYLATION [LARGE SCALE ANALYSIS] AT LYS-3154</scope>
    <scope>IDENTIFICATION BY MASS SPECTROMETRY [LARGE SCALE ANALYSIS]</scope>
</reference>
<reference key="11">
    <citation type="journal article" date="2017" name="Nat. Struct. Mol. Biol.">
        <title>Site-specific mapping of the human SUMO proteome reveals co-modification with phosphorylation.</title>
        <authorList>
            <person name="Hendriks I.A."/>
            <person name="Lyon D."/>
            <person name="Young C."/>
            <person name="Jensen L.J."/>
            <person name="Vertegaal A.C."/>
            <person name="Nielsen M.L."/>
        </authorList>
    </citation>
    <scope>SUMOYLATION [LARGE SCALE ANALYSIS] AT LYS-1149; LYS-1299; LYS-1324; LYS-1546; LYS-1790 AND LYS-3154</scope>
    <scope>IDENTIFICATION BY MASS SPECTROMETRY [LARGE SCALE ANALYSIS]</scope>
</reference>
<dbReference type="EMBL" id="AB083343">
    <property type="protein sequence ID" value="BAE96598.1"/>
    <property type="molecule type" value="mRNA"/>
</dbReference>
<dbReference type="EMBL" id="AY260762">
    <property type="protein sequence ID" value="AAP20225.1"/>
    <property type="molecule type" value="mRNA"/>
</dbReference>
<dbReference type="EMBL" id="AK131408">
    <property type="status" value="NOT_ANNOTATED_CDS"/>
    <property type="molecule type" value="mRNA"/>
</dbReference>
<dbReference type="EMBL" id="AC011716">
    <property type="status" value="NOT_ANNOTATED_CDS"/>
    <property type="molecule type" value="Genomic_DNA"/>
</dbReference>
<dbReference type="EMBL" id="AC023200">
    <property type="status" value="NOT_ANNOTATED_CDS"/>
    <property type="molecule type" value="Genomic_DNA"/>
</dbReference>
<dbReference type="EMBL" id="AC087110">
    <property type="status" value="NOT_ANNOTATED_CDS"/>
    <property type="molecule type" value="Genomic_DNA"/>
</dbReference>
<dbReference type="EMBL" id="CH471068">
    <property type="protein sequence ID" value="EAW87051.1"/>
    <property type="molecule type" value="Genomic_DNA"/>
</dbReference>
<dbReference type="CCDS" id="CCDS47878.2">
    <molecule id="Q86UP3-5"/>
</dbReference>
<dbReference type="RefSeq" id="NP_078997.4">
    <molecule id="Q86UP3-5"/>
    <property type="nucleotide sequence ID" value="NM_024721.4"/>
</dbReference>
<dbReference type="RefSeq" id="XP_011515894.1">
    <property type="nucleotide sequence ID" value="XM_011517592.2"/>
</dbReference>
<dbReference type="RefSeq" id="XP_011515895.1">
    <property type="nucleotide sequence ID" value="XM_011517593.2"/>
</dbReference>
<dbReference type="RefSeq" id="XP_011515896.1">
    <property type="nucleotide sequence ID" value="XM_011517594.2"/>
</dbReference>
<dbReference type="RefSeq" id="XP_011515897.1">
    <property type="nucleotide sequence ID" value="XM_011517595.2"/>
</dbReference>
<dbReference type="SMR" id="Q86UP3"/>
<dbReference type="BioGRID" id="122877">
    <property type="interactions" value="71"/>
</dbReference>
<dbReference type="FunCoup" id="Q86UP3">
    <property type="interactions" value="1631"/>
</dbReference>
<dbReference type="IntAct" id="Q86UP3">
    <property type="interactions" value="50"/>
</dbReference>
<dbReference type="MINT" id="Q86UP3"/>
<dbReference type="STRING" id="9606.ENSP00000498627"/>
<dbReference type="GlyCosmos" id="Q86UP3">
    <property type="glycosylation" value="1 site, 1 glycan"/>
</dbReference>
<dbReference type="GlyGen" id="Q86UP3">
    <property type="glycosylation" value="7 sites, 1 O-linked glycan (5 sites)"/>
</dbReference>
<dbReference type="iPTMnet" id="Q86UP3"/>
<dbReference type="PhosphoSitePlus" id="Q86UP3"/>
<dbReference type="SwissPalm" id="Q86UP3"/>
<dbReference type="BioMuta" id="ZFHX4"/>
<dbReference type="DMDM" id="74762449"/>
<dbReference type="jPOST" id="Q86UP3"/>
<dbReference type="MassIVE" id="Q86UP3"/>
<dbReference type="PaxDb" id="9606-ENSP00000430497"/>
<dbReference type="PeptideAtlas" id="Q86UP3"/>
<dbReference type="ProteomicsDB" id="32248"/>
<dbReference type="ProteomicsDB" id="69844">
    <molecule id="Q86UP3-1"/>
</dbReference>
<dbReference type="ProteomicsDB" id="69845">
    <molecule id="Q86UP3-2"/>
</dbReference>
<dbReference type="ProteomicsDB" id="69846">
    <molecule id="Q86UP3-3"/>
</dbReference>
<dbReference type="ProteomicsDB" id="69847">
    <molecule id="Q86UP3-4"/>
</dbReference>
<dbReference type="Pumba" id="Q86UP3"/>
<dbReference type="Antibodypedia" id="1757">
    <property type="antibodies" value="62 antibodies from 16 providers"/>
</dbReference>
<dbReference type="DNASU" id="79776"/>
<dbReference type="Ensembl" id="ENST00000651372.2">
    <molecule id="Q86UP3-5"/>
    <property type="protein sequence ID" value="ENSP00000498627.1"/>
    <property type="gene ID" value="ENSG00000091656.19"/>
</dbReference>
<dbReference type="GeneID" id="79776"/>
<dbReference type="KEGG" id="hsa:79776"/>
<dbReference type="MANE-Select" id="ENST00000651372.2">
    <molecule id="Q86UP3-5"/>
    <property type="protein sequence ID" value="ENSP00000498627.1"/>
    <property type="RefSeq nucleotide sequence ID" value="NM_024721.5"/>
    <property type="RefSeq protein sequence ID" value="NP_078997.4"/>
</dbReference>
<dbReference type="UCSC" id="uc003yau.3">
    <molecule id="Q86UP3-1"/>
    <property type="organism name" value="human"/>
</dbReference>
<dbReference type="AGR" id="HGNC:30939"/>
<dbReference type="CTD" id="79776"/>
<dbReference type="DisGeNET" id="79776"/>
<dbReference type="GeneCards" id="ZFHX4"/>
<dbReference type="HGNC" id="HGNC:30939">
    <property type="gene designation" value="ZFHX4"/>
</dbReference>
<dbReference type="HPA" id="ENSG00000091656">
    <property type="expression patterns" value="Low tissue specificity"/>
</dbReference>
<dbReference type="MalaCards" id="ZFHX4"/>
<dbReference type="MIM" id="606940">
    <property type="type" value="gene"/>
</dbReference>
<dbReference type="neXtProt" id="NX_Q86UP3"/>
<dbReference type="OpenTargets" id="ENSG00000091656"/>
<dbReference type="Orphanet" id="91411">
    <property type="disease" value="Congenital ptosis"/>
</dbReference>
<dbReference type="PharmGKB" id="PA134986366"/>
<dbReference type="VEuPathDB" id="HostDB:ENSG00000091656"/>
<dbReference type="eggNOG" id="KOG1146">
    <property type="taxonomic scope" value="Eukaryota"/>
</dbReference>
<dbReference type="GeneTree" id="ENSGT00940000159542"/>
<dbReference type="InParanoid" id="Q86UP3"/>
<dbReference type="OMA" id="DESKTGM"/>
<dbReference type="OrthoDB" id="6417226at2759"/>
<dbReference type="PAN-GO" id="Q86UP3">
    <property type="GO annotations" value="4 GO annotations based on evolutionary models"/>
</dbReference>
<dbReference type="PhylomeDB" id="Q86UP3"/>
<dbReference type="TreeFam" id="TF323288"/>
<dbReference type="PathwayCommons" id="Q86UP3"/>
<dbReference type="SignaLink" id="Q86UP3"/>
<dbReference type="BioGRID-ORCS" id="79776">
    <property type="hits" value="15 hits in 1185 CRISPR screens"/>
</dbReference>
<dbReference type="ChiTaRS" id="ZFHX4">
    <property type="organism name" value="human"/>
</dbReference>
<dbReference type="GenomeRNAi" id="79776"/>
<dbReference type="Pharos" id="Q86UP3">
    <property type="development level" value="Tbio"/>
</dbReference>
<dbReference type="PRO" id="PR:Q86UP3"/>
<dbReference type="Proteomes" id="UP000005640">
    <property type="component" value="Chromosome 8"/>
</dbReference>
<dbReference type="RNAct" id="Q86UP3">
    <property type="molecule type" value="protein"/>
</dbReference>
<dbReference type="Bgee" id="ENSG00000091656">
    <property type="expression patterns" value="Expressed in calcaneal tendon and 172 other cell types or tissues"/>
</dbReference>
<dbReference type="ExpressionAtlas" id="Q86UP3">
    <property type="expression patterns" value="baseline and differential"/>
</dbReference>
<dbReference type="GO" id="GO:0000785">
    <property type="term" value="C:chromatin"/>
    <property type="evidence" value="ECO:0000247"/>
    <property type="project" value="NTNU_SB"/>
</dbReference>
<dbReference type="GO" id="GO:0005634">
    <property type="term" value="C:nucleus"/>
    <property type="evidence" value="ECO:0000318"/>
    <property type="project" value="GO_Central"/>
</dbReference>
<dbReference type="GO" id="GO:0000981">
    <property type="term" value="F:DNA-binding transcription factor activity, RNA polymerase II-specific"/>
    <property type="evidence" value="ECO:0000247"/>
    <property type="project" value="NTNU_SB"/>
</dbReference>
<dbReference type="GO" id="GO:0000978">
    <property type="term" value="F:RNA polymerase II cis-regulatory region sequence-specific DNA binding"/>
    <property type="evidence" value="ECO:0000318"/>
    <property type="project" value="GO_Central"/>
</dbReference>
<dbReference type="GO" id="GO:0008270">
    <property type="term" value="F:zinc ion binding"/>
    <property type="evidence" value="ECO:0007669"/>
    <property type="project" value="UniProtKB-KW"/>
</dbReference>
<dbReference type="GO" id="GO:0006357">
    <property type="term" value="P:regulation of transcription by RNA polymerase II"/>
    <property type="evidence" value="ECO:0000318"/>
    <property type="project" value="GO_Central"/>
</dbReference>
<dbReference type="CDD" id="cd00086">
    <property type="entry name" value="homeodomain"/>
    <property type="match status" value="4"/>
</dbReference>
<dbReference type="FunFam" id="1.10.10.60:FF:000082">
    <property type="entry name" value="Putative zinc finger homeobox protein 4"/>
    <property type="match status" value="1"/>
</dbReference>
<dbReference type="FunFam" id="3.30.160.60:FF:000429">
    <property type="entry name" value="Zinc finger homeobox protein 3"/>
    <property type="match status" value="1"/>
</dbReference>
<dbReference type="FunFam" id="3.30.160.60:FF:000317">
    <property type="entry name" value="zinc finger homeobox protein 3"/>
    <property type="match status" value="1"/>
</dbReference>
<dbReference type="FunFam" id="1.10.10.60:FF:000064">
    <property type="entry name" value="Zinc finger homeobox protein 4"/>
    <property type="match status" value="1"/>
</dbReference>
<dbReference type="FunFam" id="1.10.10.60:FF:000096">
    <property type="entry name" value="Zinc finger homeobox protein 4"/>
    <property type="match status" value="1"/>
</dbReference>
<dbReference type="FunFam" id="3.30.160.60:FF:000081">
    <property type="entry name" value="Zinc finger homeobox protein 4"/>
    <property type="match status" value="1"/>
</dbReference>
<dbReference type="FunFam" id="3.30.160.60:FF:001440">
    <property type="entry name" value="Zinc finger homeobox protein 4"/>
    <property type="match status" value="1"/>
</dbReference>
<dbReference type="FunFam" id="1.10.10.60:FF:000058">
    <property type="entry name" value="zinc finger homeobox protein 4"/>
    <property type="match status" value="1"/>
</dbReference>
<dbReference type="FunFam" id="3.30.160.60:FF:000446">
    <property type="entry name" value="Zinc finger protein"/>
    <property type="match status" value="1"/>
</dbReference>
<dbReference type="Gene3D" id="3.30.160.60">
    <property type="entry name" value="Classic Zinc Finger"/>
    <property type="match status" value="5"/>
</dbReference>
<dbReference type="Gene3D" id="1.10.10.60">
    <property type="entry name" value="Homeodomain-like"/>
    <property type="match status" value="4"/>
</dbReference>
<dbReference type="InterPro" id="IPR001356">
    <property type="entry name" value="HD"/>
</dbReference>
<dbReference type="InterPro" id="IPR017970">
    <property type="entry name" value="Homeobox_CS"/>
</dbReference>
<dbReference type="InterPro" id="IPR009057">
    <property type="entry name" value="Homeodomain-like_sf"/>
</dbReference>
<dbReference type="InterPro" id="IPR003604">
    <property type="entry name" value="Matrin/U1-like-C_Znf_C2H2"/>
</dbReference>
<dbReference type="InterPro" id="IPR036236">
    <property type="entry name" value="Znf_C2H2_sf"/>
</dbReference>
<dbReference type="InterPro" id="IPR013087">
    <property type="entry name" value="Znf_C2H2_type"/>
</dbReference>
<dbReference type="InterPro" id="IPR051968">
    <property type="entry name" value="ZnFinger_Homeobox_TR"/>
</dbReference>
<dbReference type="PANTHER" id="PTHR45891">
    <property type="entry name" value="ZINC FINGER HOMEOBOX PROTEIN"/>
    <property type="match status" value="1"/>
</dbReference>
<dbReference type="PANTHER" id="PTHR45891:SF2">
    <property type="entry name" value="ZINC FINGER HOMEOBOX PROTEIN 4"/>
    <property type="match status" value="1"/>
</dbReference>
<dbReference type="Pfam" id="PF00046">
    <property type="entry name" value="Homeodomain"/>
    <property type="match status" value="4"/>
</dbReference>
<dbReference type="Pfam" id="PF00096">
    <property type="entry name" value="zf-C2H2"/>
    <property type="match status" value="1"/>
</dbReference>
<dbReference type="Pfam" id="PF24056">
    <property type="entry name" value="zf-C2H2_ZFHX3"/>
    <property type="match status" value="1"/>
</dbReference>
<dbReference type="Pfam" id="PF12874">
    <property type="entry name" value="zf-met"/>
    <property type="match status" value="1"/>
</dbReference>
<dbReference type="SMART" id="SM00389">
    <property type="entry name" value="HOX"/>
    <property type="match status" value="4"/>
</dbReference>
<dbReference type="SMART" id="SM00355">
    <property type="entry name" value="ZnF_C2H2"/>
    <property type="match status" value="23"/>
</dbReference>
<dbReference type="SMART" id="SM00451">
    <property type="entry name" value="ZnF_U1"/>
    <property type="match status" value="7"/>
</dbReference>
<dbReference type="SUPFAM" id="SSF57667">
    <property type="entry name" value="beta-beta-alpha zinc fingers"/>
    <property type="match status" value="6"/>
</dbReference>
<dbReference type="SUPFAM" id="SSF46689">
    <property type="entry name" value="Homeodomain-like"/>
    <property type="match status" value="4"/>
</dbReference>
<dbReference type="PROSITE" id="PS00027">
    <property type="entry name" value="HOMEOBOX_1"/>
    <property type="match status" value="2"/>
</dbReference>
<dbReference type="PROSITE" id="PS50071">
    <property type="entry name" value="HOMEOBOX_2"/>
    <property type="match status" value="4"/>
</dbReference>
<dbReference type="PROSITE" id="PS00028">
    <property type="entry name" value="ZINC_FINGER_C2H2_1"/>
    <property type="match status" value="13"/>
</dbReference>
<dbReference type="PROSITE" id="PS50157">
    <property type="entry name" value="ZINC_FINGER_C2H2_2"/>
    <property type="match status" value="7"/>
</dbReference>
<proteinExistence type="evidence at protein level"/>
<comment type="function">
    <text evidence="1">May play a role in neural and muscle differentiation (By similarity). May be involved in transcriptional regulation.</text>
</comment>
<comment type="subcellular location">
    <subcellularLocation>
        <location evidence="9">Nucleus</location>
    </subcellularLocation>
</comment>
<comment type="alternative products">
    <event type="alternative splicing"/>
    <isoform>
        <id>Q86UP3-1</id>
        <name>1</name>
        <sequence type="displayed"/>
    </isoform>
    <isoform>
        <id>Q86UP3-2</id>
        <name>2</name>
        <sequence type="described" ref="VSP_023298 VSP_023301 VSP_023302 VSP_023303 VSP_023304"/>
    </isoform>
    <isoform>
        <id>Q86UP3-3</id>
        <name>3</name>
        <sequence type="described" ref="VSP_023299 VSP_023300"/>
    </isoform>
    <isoform>
        <id>Q86UP3-4</id>
        <name>4</name>
        <sequence type="described" ref="VSP_023304"/>
    </isoform>
    <isoform>
        <id>Q86UP3-5</id>
        <name>5</name>
        <sequence type="described" ref="VSP_023298 VSP_023301 VSP_023302 VSP_023304"/>
    </isoform>
</comment>
<comment type="tissue specificity">
    <text>Expressed in brain, skeletal muscle and liver. Very low expression in stomach.</text>
</comment>
<comment type="disease">
    <text evidence="6">A chromosomal aberration involving ZFHX4 is found in one patient with ptosis. Translocation t(1;8)(p34.3;q21.12).</text>
</comment>
<comment type="similarity">
    <text evidence="9">Belongs to the krueppel C2H2-type zinc-finger protein family.</text>
</comment>
<comment type="sequence caution" evidence="9">
    <conflict type="frameshift">
        <sequence resource="EMBL" id="AK131408"/>
    </conflict>
</comment>
<organism>
    <name type="scientific">Homo sapiens</name>
    <name type="common">Human</name>
    <dbReference type="NCBI Taxonomy" id="9606"/>
    <lineage>
        <taxon>Eukaryota</taxon>
        <taxon>Metazoa</taxon>
        <taxon>Chordata</taxon>
        <taxon>Craniata</taxon>
        <taxon>Vertebrata</taxon>
        <taxon>Euteleostomi</taxon>
        <taxon>Mammalia</taxon>
        <taxon>Eutheria</taxon>
        <taxon>Euarchontoglires</taxon>
        <taxon>Primates</taxon>
        <taxon>Haplorrhini</taxon>
        <taxon>Catarrhini</taxon>
        <taxon>Hominidae</taxon>
        <taxon>Homo</taxon>
    </lineage>
</organism>
<name>ZFHX4_HUMAN</name>